<sequence>MGSPTWLQGEKSSPNARGQHSPGFCPSGPQPCPKPRGPQPCPKPRGPQPCPKPRGPQPCTPALLWAPHRLEGLSQSQDGLLPTSPCFVSGTEAPTACGPCIDIESGSPHRYEASEESSDSDVELVRPRQVKRRRLLPGTVPASVSVYSNKVNSSLKLPPDNSKALLQMSELHSIRGSEDVESEIVPPVTQQKPPTKELTDSETDETEPPNTERLRTGSPSPPPTPKTPVRRKGRAYNKIREMDARLRDLGTVLSPGQKVTTEENDVIVVGSSPAPELTVKVRRGGKLFRINLAMWDPLEKLAQSMASQLNVEPSRILLLLGDEELNKSQTPKSMNLTVADIIDCVVLSPPDGQEDSDPNEKICIKVQGKEKQSHLSVMVGKVEPLQSLMDQYQAAMGLTKKHKVSFFFEGQKLKGKNTAEELGLESDDIIEVWA</sequence>
<name>NF2IP_XENTR</name>
<proteinExistence type="evidence at transcript level"/>
<organism>
    <name type="scientific">Xenopus tropicalis</name>
    <name type="common">Western clawed frog</name>
    <name type="synonym">Silurana tropicalis</name>
    <dbReference type="NCBI Taxonomy" id="8364"/>
    <lineage>
        <taxon>Eukaryota</taxon>
        <taxon>Metazoa</taxon>
        <taxon>Chordata</taxon>
        <taxon>Craniata</taxon>
        <taxon>Vertebrata</taxon>
        <taxon>Euteleostomi</taxon>
        <taxon>Amphibia</taxon>
        <taxon>Batrachia</taxon>
        <taxon>Anura</taxon>
        <taxon>Pipoidea</taxon>
        <taxon>Pipidae</taxon>
        <taxon>Xenopodinae</taxon>
        <taxon>Xenopus</taxon>
        <taxon>Silurana</taxon>
    </lineage>
</organism>
<protein>
    <recommendedName>
        <fullName>NFATC2-interacting protein</fullName>
    </recommendedName>
    <alternativeName>
        <fullName>Nuclear factor of activated T-cells, cytoplasmic 2-interacting protein</fullName>
    </alternativeName>
</protein>
<comment type="function">
    <text evidence="1">Regulates the magnitude of NFAT-driven transcription of a specific subset of cytokine genes.</text>
</comment>
<comment type="subcellular location">
    <subcellularLocation>
        <location evidence="1">Nucleus</location>
    </subcellularLocation>
    <subcellularLocation>
        <location evidence="1">Cytoplasm</location>
    </subcellularLocation>
</comment>
<dbReference type="EMBL" id="BC122026">
    <property type="protein sequence ID" value="AAI22027.1"/>
    <property type="molecule type" value="mRNA"/>
</dbReference>
<dbReference type="RefSeq" id="NP_001072535.1">
    <property type="nucleotide sequence ID" value="NM_001079067.1"/>
</dbReference>
<dbReference type="SMR" id="Q0P4K8"/>
<dbReference type="FunCoup" id="Q0P4K8">
    <property type="interactions" value="1140"/>
</dbReference>
<dbReference type="DNASU" id="779990"/>
<dbReference type="GeneID" id="779990"/>
<dbReference type="KEGG" id="xtr:779990"/>
<dbReference type="CTD" id="84901"/>
<dbReference type="Xenbase" id="XB-GENE-6457267">
    <property type="gene designation" value="nfatc2ip"/>
</dbReference>
<dbReference type="InParanoid" id="Q0P4K8"/>
<dbReference type="OMA" id="QPCPKPR"/>
<dbReference type="OrthoDB" id="442921at2759"/>
<dbReference type="Proteomes" id="UP000008143">
    <property type="component" value="Chromosome 9"/>
</dbReference>
<dbReference type="GO" id="GO:0005737">
    <property type="term" value="C:cytoplasm"/>
    <property type="evidence" value="ECO:0007669"/>
    <property type="project" value="UniProtKB-SubCell"/>
</dbReference>
<dbReference type="GO" id="GO:0005634">
    <property type="term" value="C:nucleus"/>
    <property type="evidence" value="ECO:0007669"/>
    <property type="project" value="UniProtKB-SubCell"/>
</dbReference>
<dbReference type="CDD" id="cd17078">
    <property type="entry name" value="Ubl_SLD1_NFATC2ip"/>
    <property type="match status" value="1"/>
</dbReference>
<dbReference type="CDD" id="cd17079">
    <property type="entry name" value="Ubl_SLD2_NFATC2ip"/>
    <property type="match status" value="1"/>
</dbReference>
<dbReference type="Gene3D" id="3.10.20.90">
    <property type="entry name" value="Phosphatidylinositol 3-kinase Catalytic Subunit, Chain A, domain 1"/>
    <property type="match status" value="2"/>
</dbReference>
<dbReference type="InterPro" id="IPR052324">
    <property type="entry name" value="NFATC2-Int_DNA_Repair"/>
</dbReference>
<dbReference type="InterPro" id="IPR022617">
    <property type="entry name" value="Rad60/SUMO-like_dom"/>
</dbReference>
<dbReference type="InterPro" id="IPR029071">
    <property type="entry name" value="Ubiquitin-like_domsf"/>
</dbReference>
<dbReference type="PANTHER" id="PTHR47187">
    <property type="entry name" value="NFATC2-INTERACTING PROTEIN"/>
    <property type="match status" value="1"/>
</dbReference>
<dbReference type="PANTHER" id="PTHR47187:SF1">
    <property type="entry name" value="NFATC2-INTERACTING PROTEIN"/>
    <property type="match status" value="1"/>
</dbReference>
<dbReference type="Pfam" id="PF11976">
    <property type="entry name" value="Rad60-SLD"/>
    <property type="match status" value="1"/>
</dbReference>
<dbReference type="SUPFAM" id="SSF54236">
    <property type="entry name" value="Ubiquitin-like"/>
    <property type="match status" value="2"/>
</dbReference>
<gene>
    <name type="primary">nfatc2ip</name>
</gene>
<accession>Q0P4K8</accession>
<feature type="chain" id="PRO_0000281012" description="NFATC2-interacting protein">
    <location>
        <begin position="1"/>
        <end position="434"/>
    </location>
</feature>
<feature type="domain" description="Ubiquitin-like">
    <location>
        <begin position="275"/>
        <end position="351"/>
    </location>
</feature>
<feature type="region of interest" description="Disordered" evidence="2">
    <location>
        <begin position="1"/>
        <end position="63"/>
    </location>
</feature>
<feature type="region of interest" description="Disordered" evidence="2">
    <location>
        <begin position="176"/>
        <end position="237"/>
    </location>
</feature>
<feature type="compositionally biased region" description="Pro residues" evidence="2">
    <location>
        <begin position="28"/>
        <end position="59"/>
    </location>
</feature>
<feature type="compositionally biased region" description="Basic residues" evidence="2">
    <location>
        <begin position="228"/>
        <end position="237"/>
    </location>
</feature>
<reference key="1">
    <citation type="submission" date="2006-08" db="EMBL/GenBank/DDBJ databases">
        <authorList>
            <consortium name="NIH - Xenopus Gene Collection (XGC) project"/>
        </authorList>
    </citation>
    <scope>NUCLEOTIDE SEQUENCE [LARGE SCALE MRNA]</scope>
    <source>
        <strain>N6</strain>
        <tissue>Lung</tissue>
    </source>
</reference>
<evidence type="ECO:0000250" key="1"/>
<evidence type="ECO:0000256" key="2">
    <source>
        <dbReference type="SAM" id="MobiDB-lite"/>
    </source>
</evidence>
<keyword id="KW-0175">Coiled coil</keyword>
<keyword id="KW-0963">Cytoplasm</keyword>
<keyword id="KW-0539">Nucleus</keyword>
<keyword id="KW-1185">Reference proteome</keyword>